<name>Y913_TREPA</name>
<accession>O83883</accession>
<keyword id="KW-1185">Reference proteome</keyword>
<comment type="similarity">
    <text evidence="1">Belongs to the UPF0102 family.</text>
</comment>
<dbReference type="EMBL" id="AE000520">
    <property type="protein sequence ID" value="AAC65864.1"/>
    <property type="molecule type" value="Genomic_DNA"/>
</dbReference>
<dbReference type="PIR" id="F71268">
    <property type="entry name" value="F71268"/>
</dbReference>
<dbReference type="RefSeq" id="WP_010882356.1">
    <property type="nucleotide sequence ID" value="NC_021490.2"/>
</dbReference>
<dbReference type="SMR" id="O83883"/>
<dbReference type="IntAct" id="O83883">
    <property type="interactions" value="3"/>
</dbReference>
<dbReference type="STRING" id="243276.TP_0913"/>
<dbReference type="EnsemblBacteria" id="AAC65864">
    <property type="protein sequence ID" value="AAC65864"/>
    <property type="gene ID" value="TP_0913"/>
</dbReference>
<dbReference type="KEGG" id="tpa:TP_0913"/>
<dbReference type="KEGG" id="tpw:TPANIC_0913"/>
<dbReference type="eggNOG" id="COG0792">
    <property type="taxonomic scope" value="Bacteria"/>
</dbReference>
<dbReference type="HOGENOM" id="CLU_115353_2_1_12"/>
<dbReference type="OrthoDB" id="9802516at2"/>
<dbReference type="Proteomes" id="UP000000811">
    <property type="component" value="Chromosome"/>
</dbReference>
<dbReference type="GO" id="GO:0003676">
    <property type="term" value="F:nucleic acid binding"/>
    <property type="evidence" value="ECO:0007669"/>
    <property type="project" value="InterPro"/>
</dbReference>
<dbReference type="CDD" id="cd20736">
    <property type="entry name" value="PoNe_Nuclease"/>
    <property type="match status" value="1"/>
</dbReference>
<dbReference type="Gene3D" id="3.40.1350.10">
    <property type="match status" value="1"/>
</dbReference>
<dbReference type="HAMAP" id="MF_00048">
    <property type="entry name" value="UPF0102"/>
    <property type="match status" value="1"/>
</dbReference>
<dbReference type="InterPro" id="IPR011335">
    <property type="entry name" value="Restrct_endonuc-II-like"/>
</dbReference>
<dbReference type="InterPro" id="IPR011856">
    <property type="entry name" value="tRNA_endonuc-like_dom_sf"/>
</dbReference>
<dbReference type="InterPro" id="IPR003509">
    <property type="entry name" value="UPF0102_YraN-like"/>
</dbReference>
<dbReference type="NCBIfam" id="NF009150">
    <property type="entry name" value="PRK12497.1-3"/>
    <property type="match status" value="1"/>
</dbReference>
<dbReference type="NCBIfam" id="TIGR00252">
    <property type="entry name" value="YraN family protein"/>
    <property type="match status" value="1"/>
</dbReference>
<dbReference type="PANTHER" id="PTHR34039">
    <property type="entry name" value="UPF0102 PROTEIN YRAN"/>
    <property type="match status" value="1"/>
</dbReference>
<dbReference type="PANTHER" id="PTHR34039:SF1">
    <property type="entry name" value="UPF0102 PROTEIN YRAN"/>
    <property type="match status" value="1"/>
</dbReference>
<dbReference type="Pfam" id="PF02021">
    <property type="entry name" value="UPF0102"/>
    <property type="match status" value="1"/>
</dbReference>
<dbReference type="SUPFAM" id="SSF52980">
    <property type="entry name" value="Restriction endonuclease-like"/>
    <property type="match status" value="1"/>
</dbReference>
<proteinExistence type="inferred from homology"/>
<reference key="1">
    <citation type="journal article" date="1998" name="Science">
        <title>Complete genome sequence of Treponema pallidum, the syphilis spirochete.</title>
        <authorList>
            <person name="Fraser C.M."/>
            <person name="Norris S.J."/>
            <person name="Weinstock G.M."/>
            <person name="White O."/>
            <person name="Sutton G.G."/>
            <person name="Dodson R.J."/>
            <person name="Gwinn M.L."/>
            <person name="Hickey E.K."/>
            <person name="Clayton R.A."/>
            <person name="Ketchum K.A."/>
            <person name="Sodergren E."/>
            <person name="Hardham J.M."/>
            <person name="McLeod M.P."/>
            <person name="Salzberg S.L."/>
            <person name="Peterson J.D."/>
            <person name="Khalak H.G."/>
            <person name="Richardson D.L."/>
            <person name="Howell J.K."/>
            <person name="Chidambaram M."/>
            <person name="Utterback T.R."/>
            <person name="McDonald L.A."/>
            <person name="Artiach P."/>
            <person name="Bowman C."/>
            <person name="Cotton M.D."/>
            <person name="Fujii C."/>
            <person name="Garland S.A."/>
            <person name="Hatch B."/>
            <person name="Horst K."/>
            <person name="Roberts K.M."/>
            <person name="Sandusky M."/>
            <person name="Weidman J.F."/>
            <person name="Smith H.O."/>
            <person name="Venter J.C."/>
        </authorList>
    </citation>
    <scope>NUCLEOTIDE SEQUENCE [LARGE SCALE GENOMIC DNA]</scope>
    <source>
        <strain>Nichols</strain>
    </source>
</reference>
<organism>
    <name type="scientific">Treponema pallidum (strain Nichols)</name>
    <dbReference type="NCBI Taxonomy" id="243276"/>
    <lineage>
        <taxon>Bacteria</taxon>
        <taxon>Pseudomonadati</taxon>
        <taxon>Spirochaetota</taxon>
        <taxon>Spirochaetia</taxon>
        <taxon>Spirochaetales</taxon>
        <taxon>Treponemataceae</taxon>
        <taxon>Treponema</taxon>
    </lineage>
</organism>
<protein>
    <recommendedName>
        <fullName>UPF0102 protein TP_0913</fullName>
    </recommendedName>
</protein>
<evidence type="ECO:0000305" key="1"/>
<sequence>MPKHNKLLGAFGEAYAARWLATRGYIIITRNWRRATGEIDIIAQQDDTIVFVEVKTLRCTSYADLAIIVGKRKQKRICETAKHFLASAREYNHMCARFDVIVLRSDPFRRQDVDIVHLPHAFEDLV</sequence>
<gene>
    <name type="ordered locus">TP_0913</name>
</gene>
<feature type="chain" id="PRO_0000167385" description="UPF0102 protein TP_0913">
    <location>
        <begin position="1"/>
        <end position="126"/>
    </location>
</feature>